<evidence type="ECO:0000250" key="1">
    <source>
        <dbReference type="UniProtKB" id="P47057"/>
    </source>
</evidence>
<evidence type="ECO:0000250" key="2">
    <source>
        <dbReference type="UniProtKB" id="Q3UR97"/>
    </source>
</evidence>
<evidence type="ECO:0000250" key="3">
    <source>
        <dbReference type="UniProtKB" id="Q6P4T1"/>
    </source>
</evidence>
<evidence type="ECO:0000250" key="4">
    <source>
        <dbReference type="UniProtKB" id="Q96L94"/>
    </source>
</evidence>
<evidence type="ECO:0000255" key="5"/>
<evidence type="ECO:0000255" key="6">
    <source>
        <dbReference type="PROSITE-ProRule" id="PRU00147"/>
    </source>
</evidence>
<evidence type="ECO:0000305" key="7"/>
<gene>
    <name type="primary">SNX4</name>
    <name type="synonym">ATG24</name>
    <name type="ordered locus">ACR074W</name>
</gene>
<organism>
    <name type="scientific">Eremothecium gossypii (strain ATCC 10895 / CBS 109.51 / FGSC 9923 / NRRL Y-1056)</name>
    <name type="common">Yeast</name>
    <name type="synonym">Ashbya gossypii</name>
    <dbReference type="NCBI Taxonomy" id="284811"/>
    <lineage>
        <taxon>Eukaryota</taxon>
        <taxon>Fungi</taxon>
        <taxon>Dikarya</taxon>
        <taxon>Ascomycota</taxon>
        <taxon>Saccharomycotina</taxon>
        <taxon>Saccharomycetes</taxon>
        <taxon>Saccharomycetales</taxon>
        <taxon>Saccharomycetaceae</taxon>
        <taxon>Eremothecium</taxon>
    </lineage>
</organism>
<dbReference type="EMBL" id="AE016816">
    <property type="protein sequence ID" value="AAS51300.1"/>
    <property type="molecule type" value="Genomic_DNA"/>
</dbReference>
<dbReference type="RefSeq" id="NP_983476.1">
    <property type="nucleotide sequence ID" value="NM_208829.1"/>
</dbReference>
<dbReference type="SMR" id="Q75C43"/>
<dbReference type="FunCoup" id="Q75C43">
    <property type="interactions" value="566"/>
</dbReference>
<dbReference type="STRING" id="284811.Q75C43"/>
<dbReference type="EnsemblFungi" id="AAS51300">
    <property type="protein sequence ID" value="AAS51300"/>
    <property type="gene ID" value="AGOS_ACR074W"/>
</dbReference>
<dbReference type="GeneID" id="4619601"/>
<dbReference type="KEGG" id="ago:AGOS_ACR074W"/>
<dbReference type="eggNOG" id="KOG2273">
    <property type="taxonomic scope" value="Eukaryota"/>
</dbReference>
<dbReference type="HOGENOM" id="CLU_027221_0_0_1"/>
<dbReference type="InParanoid" id="Q75C43"/>
<dbReference type="OMA" id="WSLHRFI"/>
<dbReference type="OrthoDB" id="205639at2759"/>
<dbReference type="Proteomes" id="UP000000591">
    <property type="component" value="Chromosome III"/>
</dbReference>
<dbReference type="GO" id="GO:0010009">
    <property type="term" value="C:cytoplasmic side of endosome membrane"/>
    <property type="evidence" value="ECO:0007669"/>
    <property type="project" value="EnsemblFungi"/>
</dbReference>
<dbReference type="GO" id="GO:0005829">
    <property type="term" value="C:cytosol"/>
    <property type="evidence" value="ECO:0007669"/>
    <property type="project" value="UniProtKB-SubCell"/>
</dbReference>
<dbReference type="GO" id="GO:0005769">
    <property type="term" value="C:early endosome"/>
    <property type="evidence" value="ECO:0000318"/>
    <property type="project" value="GO_Central"/>
</dbReference>
<dbReference type="GO" id="GO:0048471">
    <property type="term" value="C:perinuclear region of cytoplasm"/>
    <property type="evidence" value="ECO:0007669"/>
    <property type="project" value="EnsemblFungi"/>
</dbReference>
<dbReference type="GO" id="GO:0000407">
    <property type="term" value="C:phagophore assembly site"/>
    <property type="evidence" value="ECO:0000318"/>
    <property type="project" value="GO_Central"/>
</dbReference>
<dbReference type="GO" id="GO:0034045">
    <property type="term" value="C:phagophore assembly site membrane"/>
    <property type="evidence" value="ECO:0007669"/>
    <property type="project" value="UniProtKB-SubCell"/>
</dbReference>
<dbReference type="GO" id="GO:0032266">
    <property type="term" value="F:phosphatidylinositol-3-phosphate binding"/>
    <property type="evidence" value="ECO:0007669"/>
    <property type="project" value="EnsemblFungi"/>
</dbReference>
<dbReference type="GO" id="GO:0032258">
    <property type="term" value="P:cytoplasm to vacuole targeting by the Cvt pathway"/>
    <property type="evidence" value="ECO:0007669"/>
    <property type="project" value="EnsemblFungi"/>
</dbReference>
<dbReference type="GO" id="GO:0034498">
    <property type="term" value="P:early endosome to Golgi transport"/>
    <property type="evidence" value="ECO:0007669"/>
    <property type="project" value="EnsemblFungi"/>
</dbReference>
<dbReference type="GO" id="GO:0032456">
    <property type="term" value="P:endocytic recycling"/>
    <property type="evidence" value="ECO:0000318"/>
    <property type="project" value="GO_Central"/>
</dbReference>
<dbReference type="GO" id="GO:0061723">
    <property type="term" value="P:glycophagy"/>
    <property type="evidence" value="ECO:0007669"/>
    <property type="project" value="EnsemblFungi"/>
</dbReference>
<dbReference type="GO" id="GO:0000423">
    <property type="term" value="P:mitophagy"/>
    <property type="evidence" value="ECO:0000318"/>
    <property type="project" value="GO_Central"/>
</dbReference>
<dbReference type="GO" id="GO:0034727">
    <property type="term" value="P:piecemeal microautophagy of the nucleus"/>
    <property type="evidence" value="ECO:0000318"/>
    <property type="project" value="GO_Central"/>
</dbReference>
<dbReference type="GO" id="GO:0036010">
    <property type="term" value="P:protein localization to endosome"/>
    <property type="evidence" value="ECO:0007669"/>
    <property type="project" value="EnsemblFungi"/>
</dbReference>
<dbReference type="GO" id="GO:0015031">
    <property type="term" value="P:protein transport"/>
    <property type="evidence" value="ECO:0000318"/>
    <property type="project" value="GO_Central"/>
</dbReference>
<dbReference type="GO" id="GO:0061709">
    <property type="term" value="P:reticulophagy"/>
    <property type="evidence" value="ECO:0000318"/>
    <property type="project" value="GO_Central"/>
</dbReference>
<dbReference type="Gene3D" id="1.20.1270.60">
    <property type="entry name" value="Arfaptin homology (AH) domain/BAR domain"/>
    <property type="match status" value="1"/>
</dbReference>
<dbReference type="Gene3D" id="3.30.1520.10">
    <property type="entry name" value="Phox-like domain"/>
    <property type="match status" value="1"/>
</dbReference>
<dbReference type="InterPro" id="IPR027267">
    <property type="entry name" value="AH/BAR_dom_sf"/>
</dbReference>
<dbReference type="InterPro" id="IPR001683">
    <property type="entry name" value="PX_dom"/>
</dbReference>
<dbReference type="InterPro" id="IPR036871">
    <property type="entry name" value="PX_dom_sf"/>
</dbReference>
<dbReference type="PANTHER" id="PTHR45949">
    <property type="entry name" value="SORTING NEXIN-4"/>
    <property type="match status" value="1"/>
</dbReference>
<dbReference type="PANTHER" id="PTHR45949:SF2">
    <property type="entry name" value="SORTING NEXIN-4"/>
    <property type="match status" value="1"/>
</dbReference>
<dbReference type="Pfam" id="PF00787">
    <property type="entry name" value="PX"/>
    <property type="match status" value="1"/>
</dbReference>
<dbReference type="SMART" id="SM00312">
    <property type="entry name" value="PX"/>
    <property type="match status" value="1"/>
</dbReference>
<dbReference type="SUPFAM" id="SSF64268">
    <property type="entry name" value="PX domain"/>
    <property type="match status" value="1"/>
</dbReference>
<dbReference type="PROSITE" id="PS50195">
    <property type="entry name" value="PX"/>
    <property type="match status" value="1"/>
</dbReference>
<proteinExistence type="inferred from homology"/>
<comment type="function">
    <text evidence="1">Sorting nexin, involved in the separation or division of vacuoles throughout the entire life cycle of the cells. Involved in retrieval of late-Golgi SNAREs from post-Golgi endosomes to the trans-Golgi network, for cytoplasm to vacuole transport (Cvt), and autophagy of large cargos including mitophagy, pexophagy and glycophagy.</text>
</comment>
<comment type="subcellular location">
    <subcellularLocation>
        <location evidence="1">Cytoplasm</location>
        <location evidence="1">Cytosol</location>
    </subcellularLocation>
    <subcellularLocation>
        <location evidence="1">Preautophagosomal structure membrane</location>
        <topology evidence="1">Peripheral membrane protein</topology>
    </subcellularLocation>
    <subcellularLocation>
        <location evidence="1">Endosome membrane</location>
        <topology evidence="1">Peripheral membrane protein</topology>
    </subcellularLocation>
    <text evidence="1">Endosome and other perivacuolar punctate structures. Associates to phosphatidylinositol 3-phosphate, necessary for peripheral membrane localization to the perivacuolar punctate structures.</text>
</comment>
<comment type="domain">
    <text evidence="4">The PX domain binds phosphatidylinositol 3-phosphate which is necessary for peripheral membrane localization to the perivacuolar punctate structures.</text>
</comment>
<comment type="similarity">
    <text evidence="7">Belongs to the sorting nexin family.</text>
</comment>
<reference key="1">
    <citation type="journal article" date="2004" name="Science">
        <title>The Ashbya gossypii genome as a tool for mapping the ancient Saccharomyces cerevisiae genome.</title>
        <authorList>
            <person name="Dietrich F.S."/>
            <person name="Voegeli S."/>
            <person name="Brachat S."/>
            <person name="Lerch A."/>
            <person name="Gates K."/>
            <person name="Steiner S."/>
            <person name="Mohr C."/>
            <person name="Poehlmann R."/>
            <person name="Luedi P."/>
            <person name="Choi S."/>
            <person name="Wing R.A."/>
            <person name="Flavier A."/>
            <person name="Gaffney T.D."/>
            <person name="Philippsen P."/>
        </authorList>
    </citation>
    <scope>NUCLEOTIDE SEQUENCE [LARGE SCALE GENOMIC DNA]</scope>
    <source>
        <strain>ATCC 10895 / CBS 109.51 / FGSC 9923 / NRRL Y-1056</strain>
    </source>
</reference>
<reference key="2">
    <citation type="journal article" date="2013" name="G3 (Bethesda)">
        <title>Genomes of Ashbya fungi isolated from insects reveal four mating-type loci, numerous translocations, lack of transposons, and distinct gene duplications.</title>
        <authorList>
            <person name="Dietrich F.S."/>
            <person name="Voegeli S."/>
            <person name="Kuo S."/>
            <person name="Philippsen P."/>
        </authorList>
    </citation>
    <scope>GENOME REANNOTATION</scope>
    <source>
        <strain>ATCC 10895 / CBS 109.51 / FGSC 9923 / NRRL Y-1056</strain>
    </source>
</reference>
<keyword id="KW-0072">Autophagy</keyword>
<keyword id="KW-0175">Coiled coil</keyword>
<keyword id="KW-0963">Cytoplasm</keyword>
<keyword id="KW-0967">Endosome</keyword>
<keyword id="KW-0446">Lipid-binding</keyword>
<keyword id="KW-0472">Membrane</keyword>
<keyword id="KW-0653">Protein transport</keyword>
<keyword id="KW-1185">Reference proteome</keyword>
<keyword id="KW-0813">Transport</keyword>
<accession>Q75C43</accession>
<feature type="chain" id="PRO_0000213806" description="Sorting nexin-4">
    <location>
        <begin position="1"/>
        <end position="410"/>
    </location>
</feature>
<feature type="domain" description="PX" evidence="6">
    <location>
        <begin position="11"/>
        <end position="135"/>
    </location>
</feature>
<feature type="coiled-coil region" evidence="5">
    <location>
        <begin position="329"/>
        <end position="368"/>
    </location>
</feature>
<feature type="binding site" evidence="2">
    <location>
        <position position="58"/>
    </location>
    <ligand>
        <name>a 1,2-diacyl-sn-glycero-3-phospho-(1D-myo-inositol-3-phosphate)</name>
        <dbReference type="ChEBI" id="CHEBI:58088"/>
    </ligand>
</feature>
<feature type="binding site" evidence="4">
    <location>
        <position position="60"/>
    </location>
    <ligand>
        <name>a 1,2-diacyl-sn-glycero-3-phospho-(1D-myo-inositol-3-phosphate)</name>
        <dbReference type="ChEBI" id="CHEBI:58088"/>
    </ligand>
</feature>
<feature type="binding site" evidence="4">
    <location>
        <position position="84"/>
    </location>
    <ligand>
        <name>a 1,2-diacyl-sn-glycero-3-phospho-(1D-myo-inositol-3-phosphate)</name>
        <dbReference type="ChEBI" id="CHEBI:58088"/>
    </ligand>
</feature>
<feature type="binding site" evidence="3">
    <location>
        <position position="101"/>
    </location>
    <ligand>
        <name>a 1,2-diacyl-sn-glycero-3-phospho-(1D-myo-inositol-3-phosphate)</name>
        <dbReference type="ChEBI" id="CHEBI:58088"/>
    </ligand>
</feature>
<protein>
    <recommendedName>
        <fullName>Sorting nexin-4</fullName>
    </recommendedName>
    <alternativeName>
        <fullName>Autophagy-related protein 24</fullName>
    </alternativeName>
</protein>
<sequence length="410" mass="47270">MSEIKLGDQWFIIVSDPQKQRGDKSSSGSYVTYQISSKPATEGDKRSGEDDITVVHRRYSDFVLLYQILANDYPACIVPPLPDKKVLNYLDRFSQSFTQKRCHSLQNFLQRLAQHPVLSQSKILHTFLVSSDWDAYQKSLAETVGNLSNKEELTETIMNAFKSVHSQSDEFVEIKEKSGKLDHNVSKIDKLFHRVVKKQEAIAEDYGKLGLSLRELQELVTTGDDRNSEVGNLGTKIKTFNEGMAQLSYSLRDLSRYIDYEYIIDLRDMEDYIDSMKQLIKLKDQKQIDYEELSDYLTRSINEKNNLISGYGSGSNFFKSKLEEFTGINQEAARREKISKLESKVQALTTEVENAKKVADAFEKEALKEVEIFEQIKTRELKRSLTTLADHHIEFYQKMVNTWSKIEESL</sequence>
<name>SNX4_EREGS</name>